<sequence>MSFYRGRINKGSGLFKSFPSNGEYIKKITPGIGEYFYKKHKFSGDSGLKQLSAQAWRDKLDEDDLLEYGSATYNASLPGDIIRRFFYFQFYNNVVTHPLLDLISIRRDHEAPFSDRNESKIKLDPAKRLPLGLRLADVFARWFDIYDLGWLKTLWNTYSDTGLSEIHRTYDIIFVHIVNRVAKVNPELMNFRTGDYDEILRCMRAIHAFAVLTDDVYDLYEKELIEPIRDRYEEILSAYMEEDDIPHYGLWDTVYYEGYTNLLEYVNLLIGDQTRASDTRQLSMPLITDICHLLKYIDINKGSYYRLERMLNRVDKVEKESPSYDNNIPTTRSERKKRRVGPIITTDRVYNYKGSWVDPQDDMYVVYDALRRKYKTMFFTQNTIEITTIERVSERYSLDFIERDDDGVGMTDTIKTILEDHRFNTLMKEVSKSDNTLNMLVNGNVEPVECKFASITMGEDDSVLESVNLELTVSDKYYLDDAMVFYIYVYNTLTNKNIPTAATLETLRDGPFSKPVPLKVKDVIDGYMQKHHGLGVISEKYTVEDYLLICLSDLYERDVPKFLDIYLQNRRDGYEIAENIKAILILLTSPAVSKYVYRKLMGDLLTDEDAIQYAGRAEVVTELSGVVKGNRELGFVNRYIKQGIYRASPYNVFKTDLEYLLSVLADE</sequence>
<gene>
    <name type="ORF">ORF85</name>
</gene>
<name>Y085_OSHVF</name>
<keyword id="KW-1185">Reference proteome</keyword>
<dbReference type="EMBL" id="AY509253">
    <property type="protein sequence ID" value="AAS00971.1"/>
    <property type="molecule type" value="Genomic_DNA"/>
</dbReference>
<dbReference type="RefSeq" id="YP_024624.1">
    <property type="nucleotide sequence ID" value="NC_005881.2"/>
</dbReference>
<dbReference type="KEGG" id="vg:2948199"/>
<dbReference type="Proteomes" id="UP000007021">
    <property type="component" value="Segment"/>
</dbReference>
<organismHost>
    <name type="scientific">Magallana gigas</name>
    <name type="common">Pacific oyster</name>
    <name type="synonym">Crassostrea gigas</name>
    <dbReference type="NCBI Taxonomy" id="29159"/>
</organismHost>
<organismHost>
    <name type="scientific">Pecten maximus</name>
    <name type="common">King scallop</name>
    <name type="synonym">Pilgrim's clam</name>
    <dbReference type="NCBI Taxonomy" id="6579"/>
</organismHost>
<organism>
    <name type="scientific">Ostreid herpesvirus 1 (isolate France)</name>
    <name type="common">OsHV-1</name>
    <name type="synonym">Pacific oyster herpesvirus</name>
    <dbReference type="NCBI Taxonomy" id="654903"/>
    <lineage>
        <taxon>Viruses</taxon>
        <taxon>Duplodnaviria</taxon>
        <taxon>Heunggongvirae</taxon>
        <taxon>Peploviricota</taxon>
        <taxon>Herviviricetes</taxon>
        <taxon>Herpesvirales</taxon>
        <taxon>Malacoherpesviridae</taxon>
        <taxon>Ostreavirus</taxon>
        <taxon>Ostreavirus ostreidmalaco1</taxon>
        <taxon>Ostreid herpesvirus 1</taxon>
    </lineage>
</organism>
<protein>
    <recommendedName>
        <fullName>Uncharacterized protein ORF85</fullName>
    </recommendedName>
</protein>
<reference key="1">
    <citation type="journal article" date="2005" name="J. Gen. Virol.">
        <title>A novel class of herpesvirus with bivalve hosts.</title>
        <authorList>
            <person name="Davison A.J."/>
            <person name="Trus B.L."/>
            <person name="Cheng N."/>
            <person name="Steven A.C."/>
            <person name="Watson M.S."/>
            <person name="Cunningham C."/>
            <person name="Le Deuff R.M."/>
            <person name="Renault T."/>
        </authorList>
    </citation>
    <scope>NUCLEOTIDE SEQUENCE [LARGE SCALE GENOMIC DNA]</scope>
</reference>
<feature type="chain" id="PRO_0000385106" description="Uncharacterized protein ORF85">
    <location>
        <begin position="1"/>
        <end position="667"/>
    </location>
</feature>
<proteinExistence type="predicted"/>
<accession>Q6R7E4</accession>